<gene>
    <name type="ordered locus">jhp_0762</name>
</gene>
<proteinExistence type="inferred from homology"/>
<evidence type="ECO:0000305" key="1"/>
<comment type="similarity">
    <text evidence="1">Belongs to the UPF0102 family.</text>
</comment>
<sequence length="114" mass="13196">MRFLNNKHREKGLKAEEEACGFLKTLGFEMIERNFFSQFGEIDIIALKKGVLHFIEVKSGENFDPIYAITPSKLKKMIKTIRCYLSQKDPNSDFCIDALIVKNGKFELLENITF</sequence>
<dbReference type="EMBL" id="AE001439">
    <property type="protein sequence ID" value="AAD06328.1"/>
    <property type="molecule type" value="Genomic_DNA"/>
</dbReference>
<dbReference type="PIR" id="D71893">
    <property type="entry name" value="D71893"/>
</dbReference>
<dbReference type="RefSeq" id="WP_001211704.1">
    <property type="nucleotide sequence ID" value="NC_000921.1"/>
</dbReference>
<dbReference type="SMR" id="Q9ZL19"/>
<dbReference type="KEGG" id="hpj:jhp_0762"/>
<dbReference type="PATRIC" id="fig|85963.30.peg.214"/>
<dbReference type="eggNOG" id="COG0792">
    <property type="taxonomic scope" value="Bacteria"/>
</dbReference>
<dbReference type="Proteomes" id="UP000000804">
    <property type="component" value="Chromosome"/>
</dbReference>
<dbReference type="GO" id="GO:0003676">
    <property type="term" value="F:nucleic acid binding"/>
    <property type="evidence" value="ECO:0007669"/>
    <property type="project" value="InterPro"/>
</dbReference>
<dbReference type="Gene3D" id="3.40.1350.10">
    <property type="match status" value="1"/>
</dbReference>
<dbReference type="HAMAP" id="MF_00048">
    <property type="entry name" value="UPF0102"/>
    <property type="match status" value="1"/>
</dbReference>
<dbReference type="InterPro" id="IPR011335">
    <property type="entry name" value="Restrct_endonuc-II-like"/>
</dbReference>
<dbReference type="InterPro" id="IPR011856">
    <property type="entry name" value="tRNA_endonuc-like_dom_sf"/>
</dbReference>
<dbReference type="InterPro" id="IPR003509">
    <property type="entry name" value="UPF0102_YraN-like"/>
</dbReference>
<dbReference type="NCBIfam" id="NF009152">
    <property type="entry name" value="PRK12497.2-4"/>
    <property type="match status" value="1"/>
</dbReference>
<dbReference type="PANTHER" id="PTHR34039">
    <property type="entry name" value="UPF0102 PROTEIN YRAN"/>
    <property type="match status" value="1"/>
</dbReference>
<dbReference type="PANTHER" id="PTHR34039:SF1">
    <property type="entry name" value="UPF0102 PROTEIN YRAN"/>
    <property type="match status" value="1"/>
</dbReference>
<dbReference type="Pfam" id="PF02021">
    <property type="entry name" value="UPF0102"/>
    <property type="match status" value="1"/>
</dbReference>
<dbReference type="SUPFAM" id="SSF52980">
    <property type="entry name" value="Restriction endonuclease-like"/>
    <property type="match status" value="1"/>
</dbReference>
<feature type="chain" id="PRO_0000167357" description="UPF0102 protein jhp_0762">
    <location>
        <begin position="1"/>
        <end position="114"/>
    </location>
</feature>
<name>Y823_HELPJ</name>
<protein>
    <recommendedName>
        <fullName>UPF0102 protein jhp_0762</fullName>
    </recommendedName>
</protein>
<reference key="1">
    <citation type="journal article" date="1999" name="Nature">
        <title>Genomic sequence comparison of two unrelated isolates of the human gastric pathogen Helicobacter pylori.</title>
        <authorList>
            <person name="Alm R.A."/>
            <person name="Ling L.-S.L."/>
            <person name="Moir D.T."/>
            <person name="King B.L."/>
            <person name="Brown E.D."/>
            <person name="Doig P.C."/>
            <person name="Smith D.R."/>
            <person name="Noonan B."/>
            <person name="Guild B.C."/>
            <person name="deJonge B.L."/>
            <person name="Carmel G."/>
            <person name="Tummino P.J."/>
            <person name="Caruso A."/>
            <person name="Uria-Nickelsen M."/>
            <person name="Mills D.M."/>
            <person name="Ives C."/>
            <person name="Gibson R."/>
            <person name="Merberg D."/>
            <person name="Mills S.D."/>
            <person name="Jiang Q."/>
            <person name="Taylor D.E."/>
            <person name="Vovis G.F."/>
            <person name="Trust T.J."/>
        </authorList>
    </citation>
    <scope>NUCLEOTIDE SEQUENCE [LARGE SCALE GENOMIC DNA]</scope>
    <source>
        <strain>J99 / ATCC 700824</strain>
    </source>
</reference>
<accession>Q9ZL19</accession>
<organism>
    <name type="scientific">Helicobacter pylori (strain J99 / ATCC 700824)</name>
    <name type="common">Campylobacter pylori J99</name>
    <dbReference type="NCBI Taxonomy" id="85963"/>
    <lineage>
        <taxon>Bacteria</taxon>
        <taxon>Pseudomonadati</taxon>
        <taxon>Campylobacterota</taxon>
        <taxon>Epsilonproteobacteria</taxon>
        <taxon>Campylobacterales</taxon>
        <taxon>Helicobacteraceae</taxon>
        <taxon>Helicobacter</taxon>
    </lineage>
</organism>